<reference key="1">
    <citation type="submission" date="2006-05" db="EMBL/GenBank/DDBJ databases">
        <authorList>
            <consortium name="Genoscope"/>
        </authorList>
    </citation>
    <scope>NUCLEOTIDE SEQUENCE [LARGE SCALE GENOMIC DNA]</scope>
    <source>
        <strain>RCC307</strain>
    </source>
</reference>
<sequence length="135" mass="15083">MSAKPNYETMYILRPDIAEEEVESHANKYRDLVVEAGGEVIDSQMRGKRRLAYNIGKHREGIYIQLNYSGDGKQVGPLEKAMRLSEDVIRYLTVKYEGQHSSLGRSTAPANPMASNTPRTEGQEQAKTEPQTAPA</sequence>
<name>RS6_SYNR3</name>
<organism>
    <name type="scientific">Synechococcus sp. (strain RCC307)</name>
    <dbReference type="NCBI Taxonomy" id="316278"/>
    <lineage>
        <taxon>Bacteria</taxon>
        <taxon>Bacillati</taxon>
        <taxon>Cyanobacteriota</taxon>
        <taxon>Cyanophyceae</taxon>
        <taxon>Synechococcales</taxon>
        <taxon>Synechococcaceae</taxon>
        <taxon>Synechococcus</taxon>
    </lineage>
</organism>
<dbReference type="EMBL" id="CT978603">
    <property type="protein sequence ID" value="CAK29423.1"/>
    <property type="molecule type" value="Genomic_DNA"/>
</dbReference>
<dbReference type="SMR" id="A5GX14"/>
<dbReference type="STRING" id="316278.SynRCC307_2520"/>
<dbReference type="KEGG" id="syr:SynRCC307_2520"/>
<dbReference type="eggNOG" id="COG0360">
    <property type="taxonomic scope" value="Bacteria"/>
</dbReference>
<dbReference type="HOGENOM" id="CLU_113441_4_2_3"/>
<dbReference type="OrthoDB" id="9812702at2"/>
<dbReference type="Proteomes" id="UP000001115">
    <property type="component" value="Chromosome"/>
</dbReference>
<dbReference type="GO" id="GO:0005737">
    <property type="term" value="C:cytoplasm"/>
    <property type="evidence" value="ECO:0007669"/>
    <property type="project" value="UniProtKB-ARBA"/>
</dbReference>
<dbReference type="GO" id="GO:1990904">
    <property type="term" value="C:ribonucleoprotein complex"/>
    <property type="evidence" value="ECO:0007669"/>
    <property type="project" value="UniProtKB-KW"/>
</dbReference>
<dbReference type="GO" id="GO:0005840">
    <property type="term" value="C:ribosome"/>
    <property type="evidence" value="ECO:0007669"/>
    <property type="project" value="UniProtKB-KW"/>
</dbReference>
<dbReference type="GO" id="GO:0070181">
    <property type="term" value="F:small ribosomal subunit rRNA binding"/>
    <property type="evidence" value="ECO:0007669"/>
    <property type="project" value="TreeGrafter"/>
</dbReference>
<dbReference type="GO" id="GO:0003735">
    <property type="term" value="F:structural constituent of ribosome"/>
    <property type="evidence" value="ECO:0007669"/>
    <property type="project" value="InterPro"/>
</dbReference>
<dbReference type="GO" id="GO:0006412">
    <property type="term" value="P:translation"/>
    <property type="evidence" value="ECO:0007669"/>
    <property type="project" value="UniProtKB-UniRule"/>
</dbReference>
<dbReference type="CDD" id="cd15487">
    <property type="entry name" value="bS6_chloro_cyano"/>
    <property type="match status" value="1"/>
</dbReference>
<dbReference type="Gene3D" id="3.30.70.60">
    <property type="match status" value="1"/>
</dbReference>
<dbReference type="HAMAP" id="MF_00360">
    <property type="entry name" value="Ribosomal_bS6"/>
    <property type="match status" value="1"/>
</dbReference>
<dbReference type="InterPro" id="IPR000529">
    <property type="entry name" value="Ribosomal_bS6"/>
</dbReference>
<dbReference type="InterPro" id="IPR035980">
    <property type="entry name" value="Ribosomal_bS6_sf"/>
</dbReference>
<dbReference type="InterPro" id="IPR020814">
    <property type="entry name" value="Ribosomal_S6_plastid/chlpt"/>
</dbReference>
<dbReference type="InterPro" id="IPR014717">
    <property type="entry name" value="Transl_elong_EF1B/ribsomal_bS6"/>
</dbReference>
<dbReference type="NCBIfam" id="TIGR00166">
    <property type="entry name" value="S6"/>
    <property type="match status" value="1"/>
</dbReference>
<dbReference type="PANTHER" id="PTHR21011">
    <property type="entry name" value="MITOCHONDRIAL 28S RIBOSOMAL PROTEIN S6"/>
    <property type="match status" value="1"/>
</dbReference>
<dbReference type="PANTHER" id="PTHR21011:SF1">
    <property type="entry name" value="SMALL RIBOSOMAL SUBUNIT PROTEIN BS6M"/>
    <property type="match status" value="1"/>
</dbReference>
<dbReference type="Pfam" id="PF01250">
    <property type="entry name" value="Ribosomal_S6"/>
    <property type="match status" value="1"/>
</dbReference>
<dbReference type="SUPFAM" id="SSF54995">
    <property type="entry name" value="Ribosomal protein S6"/>
    <property type="match status" value="1"/>
</dbReference>
<evidence type="ECO:0000255" key="1">
    <source>
        <dbReference type="HAMAP-Rule" id="MF_00360"/>
    </source>
</evidence>
<evidence type="ECO:0000256" key="2">
    <source>
        <dbReference type="SAM" id="MobiDB-lite"/>
    </source>
</evidence>
<evidence type="ECO:0000305" key="3"/>
<gene>
    <name evidence="1" type="primary">rpsF</name>
    <name evidence="1" type="synonym">rps6</name>
    <name type="ordered locus">SynRCC307_2520</name>
</gene>
<keyword id="KW-1185">Reference proteome</keyword>
<keyword id="KW-0687">Ribonucleoprotein</keyword>
<keyword id="KW-0689">Ribosomal protein</keyword>
<keyword id="KW-0694">RNA-binding</keyword>
<keyword id="KW-0699">rRNA-binding</keyword>
<proteinExistence type="inferred from homology"/>
<accession>A5GX14</accession>
<feature type="chain" id="PRO_1000005375" description="Small ribosomal subunit protein bS6">
    <location>
        <begin position="1"/>
        <end position="135"/>
    </location>
</feature>
<feature type="region of interest" description="Disordered" evidence="2">
    <location>
        <begin position="99"/>
        <end position="135"/>
    </location>
</feature>
<feature type="compositionally biased region" description="Polar residues" evidence="2">
    <location>
        <begin position="99"/>
        <end position="120"/>
    </location>
</feature>
<protein>
    <recommendedName>
        <fullName evidence="1">Small ribosomal subunit protein bS6</fullName>
    </recommendedName>
    <alternativeName>
        <fullName evidence="3">30S ribosomal protein S6</fullName>
    </alternativeName>
</protein>
<comment type="function">
    <text evidence="1">Binds together with bS18 to 16S ribosomal RNA.</text>
</comment>
<comment type="similarity">
    <text evidence="1">Belongs to the bacterial ribosomal protein bS6 family.</text>
</comment>